<evidence type="ECO:0000255" key="1">
    <source>
        <dbReference type="HAMAP-Rule" id="MF_00004"/>
    </source>
</evidence>
<sequence>MSSPVRVLDELDAELRAASGLVREVPDFPEPGVLFRDISPMLADGRALAAVVAALGRGHDFDVVAGVEARGFLLGAAVAQAHGTGVVGLRKPGKLPEVAHRVDYRLEYGSASLELPAGTLRAGQRVLVVDDVLATGGTLNAACELVRSAGSEVAAATVVLELTALGGRNKVPDVALHALLTA</sequence>
<dbReference type="EC" id="2.4.2.7" evidence="1"/>
<dbReference type="EMBL" id="AM420293">
    <property type="protein sequence ID" value="CAM01337.1"/>
    <property type="molecule type" value="Genomic_DNA"/>
</dbReference>
<dbReference type="RefSeq" id="WP_011873540.1">
    <property type="nucleotide sequence ID" value="NC_009142.1"/>
</dbReference>
<dbReference type="SMR" id="A4FBB2"/>
<dbReference type="STRING" id="405948.SACE_2027"/>
<dbReference type="KEGG" id="sen:SACE_2027"/>
<dbReference type="eggNOG" id="COG0503">
    <property type="taxonomic scope" value="Bacteria"/>
</dbReference>
<dbReference type="HOGENOM" id="CLU_063339_3_3_11"/>
<dbReference type="OrthoDB" id="9803963at2"/>
<dbReference type="UniPathway" id="UPA00588">
    <property type="reaction ID" value="UER00646"/>
</dbReference>
<dbReference type="Proteomes" id="UP000006728">
    <property type="component" value="Chromosome"/>
</dbReference>
<dbReference type="GO" id="GO:0005737">
    <property type="term" value="C:cytoplasm"/>
    <property type="evidence" value="ECO:0007669"/>
    <property type="project" value="UniProtKB-SubCell"/>
</dbReference>
<dbReference type="GO" id="GO:0002055">
    <property type="term" value="F:adenine binding"/>
    <property type="evidence" value="ECO:0007669"/>
    <property type="project" value="TreeGrafter"/>
</dbReference>
<dbReference type="GO" id="GO:0003999">
    <property type="term" value="F:adenine phosphoribosyltransferase activity"/>
    <property type="evidence" value="ECO:0007669"/>
    <property type="project" value="UniProtKB-UniRule"/>
</dbReference>
<dbReference type="GO" id="GO:0016208">
    <property type="term" value="F:AMP binding"/>
    <property type="evidence" value="ECO:0007669"/>
    <property type="project" value="TreeGrafter"/>
</dbReference>
<dbReference type="GO" id="GO:0006168">
    <property type="term" value="P:adenine salvage"/>
    <property type="evidence" value="ECO:0007669"/>
    <property type="project" value="InterPro"/>
</dbReference>
<dbReference type="GO" id="GO:0044209">
    <property type="term" value="P:AMP salvage"/>
    <property type="evidence" value="ECO:0007669"/>
    <property type="project" value="UniProtKB-UniRule"/>
</dbReference>
<dbReference type="GO" id="GO:0006166">
    <property type="term" value="P:purine ribonucleoside salvage"/>
    <property type="evidence" value="ECO:0007669"/>
    <property type="project" value="UniProtKB-KW"/>
</dbReference>
<dbReference type="CDD" id="cd06223">
    <property type="entry name" value="PRTases_typeI"/>
    <property type="match status" value="1"/>
</dbReference>
<dbReference type="FunFam" id="3.40.50.2020:FF:000021">
    <property type="entry name" value="Adenine phosphoribosyltransferase"/>
    <property type="match status" value="1"/>
</dbReference>
<dbReference type="Gene3D" id="3.40.50.2020">
    <property type="match status" value="1"/>
</dbReference>
<dbReference type="HAMAP" id="MF_00004">
    <property type="entry name" value="Aden_phosphoribosyltr"/>
    <property type="match status" value="1"/>
</dbReference>
<dbReference type="InterPro" id="IPR005764">
    <property type="entry name" value="Ade_phspho_trans"/>
</dbReference>
<dbReference type="InterPro" id="IPR000836">
    <property type="entry name" value="PRibTrfase_dom"/>
</dbReference>
<dbReference type="InterPro" id="IPR029057">
    <property type="entry name" value="PRTase-like"/>
</dbReference>
<dbReference type="InterPro" id="IPR050054">
    <property type="entry name" value="UPRTase/APRTase"/>
</dbReference>
<dbReference type="NCBIfam" id="NF002636">
    <property type="entry name" value="PRK02304.1-5"/>
    <property type="match status" value="1"/>
</dbReference>
<dbReference type="PANTHER" id="PTHR32315">
    <property type="entry name" value="ADENINE PHOSPHORIBOSYLTRANSFERASE"/>
    <property type="match status" value="1"/>
</dbReference>
<dbReference type="PANTHER" id="PTHR32315:SF3">
    <property type="entry name" value="ADENINE PHOSPHORIBOSYLTRANSFERASE"/>
    <property type="match status" value="1"/>
</dbReference>
<dbReference type="Pfam" id="PF00156">
    <property type="entry name" value="Pribosyltran"/>
    <property type="match status" value="1"/>
</dbReference>
<dbReference type="SUPFAM" id="SSF53271">
    <property type="entry name" value="PRTase-like"/>
    <property type="match status" value="1"/>
</dbReference>
<dbReference type="PROSITE" id="PS00103">
    <property type="entry name" value="PUR_PYR_PR_TRANSFER"/>
    <property type="match status" value="1"/>
</dbReference>
<comment type="function">
    <text evidence="1">Catalyzes a salvage reaction resulting in the formation of AMP, that is energically less costly than de novo synthesis.</text>
</comment>
<comment type="catalytic activity">
    <reaction evidence="1">
        <text>AMP + diphosphate = 5-phospho-alpha-D-ribose 1-diphosphate + adenine</text>
        <dbReference type="Rhea" id="RHEA:16609"/>
        <dbReference type="ChEBI" id="CHEBI:16708"/>
        <dbReference type="ChEBI" id="CHEBI:33019"/>
        <dbReference type="ChEBI" id="CHEBI:58017"/>
        <dbReference type="ChEBI" id="CHEBI:456215"/>
        <dbReference type="EC" id="2.4.2.7"/>
    </reaction>
</comment>
<comment type="pathway">
    <text evidence="1">Purine metabolism; AMP biosynthesis via salvage pathway; AMP from adenine: step 1/1.</text>
</comment>
<comment type="subunit">
    <text evidence="1">Homodimer.</text>
</comment>
<comment type="subcellular location">
    <subcellularLocation>
        <location evidence="1">Cytoplasm</location>
    </subcellularLocation>
</comment>
<comment type="similarity">
    <text evidence="1">Belongs to the purine/pyrimidine phosphoribosyltransferase family.</text>
</comment>
<reference key="1">
    <citation type="journal article" date="2007" name="Nat. Biotechnol.">
        <title>Complete genome sequence of the erythromycin-producing bacterium Saccharopolyspora erythraea NRRL23338.</title>
        <authorList>
            <person name="Oliynyk M."/>
            <person name="Samborskyy M."/>
            <person name="Lester J.B."/>
            <person name="Mironenko T."/>
            <person name="Scott N."/>
            <person name="Dickens S."/>
            <person name="Haydock S.F."/>
            <person name="Leadlay P.F."/>
        </authorList>
    </citation>
    <scope>NUCLEOTIDE SEQUENCE [LARGE SCALE GENOMIC DNA]</scope>
    <source>
        <strain>ATCC 11635 / DSM 40517 / JCM 4748 / NBRC 13426 / NCIMB 8594 / NRRL 2338</strain>
    </source>
</reference>
<keyword id="KW-0963">Cytoplasm</keyword>
<keyword id="KW-0328">Glycosyltransferase</keyword>
<keyword id="KW-0660">Purine salvage</keyword>
<keyword id="KW-1185">Reference proteome</keyword>
<keyword id="KW-0808">Transferase</keyword>
<feature type="chain" id="PRO_0000321399" description="Adenine phosphoribosyltransferase">
    <location>
        <begin position="1"/>
        <end position="182"/>
    </location>
</feature>
<gene>
    <name evidence="1" type="primary">apt</name>
    <name type="ordered locus">SACE_2027</name>
</gene>
<organism>
    <name type="scientific">Saccharopolyspora erythraea (strain ATCC 11635 / DSM 40517 / JCM 4748 / NBRC 13426 / NCIMB 8594 / NRRL 2338)</name>
    <dbReference type="NCBI Taxonomy" id="405948"/>
    <lineage>
        <taxon>Bacteria</taxon>
        <taxon>Bacillati</taxon>
        <taxon>Actinomycetota</taxon>
        <taxon>Actinomycetes</taxon>
        <taxon>Pseudonocardiales</taxon>
        <taxon>Pseudonocardiaceae</taxon>
        <taxon>Saccharopolyspora</taxon>
    </lineage>
</organism>
<protein>
    <recommendedName>
        <fullName evidence="1">Adenine phosphoribosyltransferase</fullName>
        <shortName evidence="1">APRT</shortName>
        <ecNumber evidence="1">2.4.2.7</ecNumber>
    </recommendedName>
</protein>
<proteinExistence type="inferred from homology"/>
<name>APT_SACEN</name>
<accession>A4FBB2</accession>